<keyword id="KW-0961">Cell wall biogenesis/degradation</keyword>
<keyword id="KW-0963">Cytoplasm</keyword>
<keyword id="KW-0328">Glycosyltransferase</keyword>
<keyword id="KW-0597">Phosphoprotein</keyword>
<keyword id="KW-1185">Reference proteome</keyword>
<keyword id="KW-0777">Teichoic acid biosynthesis</keyword>
<keyword id="KW-0808">Transferase</keyword>
<evidence type="ECO:0000269" key="1">
    <source>
    </source>
</evidence>
<evidence type="ECO:0000269" key="2">
    <source>
    </source>
</evidence>
<evidence type="ECO:0000305" key="3"/>
<gene>
    <name type="primary">tagE</name>
    <name type="synonym">gtaA</name>
    <name type="synonym">rodD</name>
    <name type="ordered locus">BSU35730</name>
</gene>
<reference key="1">
    <citation type="journal article" date="1989" name="Mol. Microbiol.">
        <title>The nucleotide sequence of the rodC operon of Bacillus subtilis.</title>
        <authorList>
            <person name="Honeyman A.L."/>
            <person name="Stewart G.C."/>
        </authorList>
    </citation>
    <scope>NUCLEOTIDE SEQUENCE [GENOMIC DNA]</scope>
    <source>
        <strain>168</strain>
    </source>
</reference>
<reference key="2">
    <citation type="journal article" date="1997" name="Nature">
        <title>The complete genome sequence of the Gram-positive bacterium Bacillus subtilis.</title>
        <authorList>
            <person name="Kunst F."/>
            <person name="Ogasawara N."/>
            <person name="Moszer I."/>
            <person name="Albertini A.M."/>
            <person name="Alloni G."/>
            <person name="Azevedo V."/>
            <person name="Bertero M.G."/>
            <person name="Bessieres P."/>
            <person name="Bolotin A."/>
            <person name="Borchert S."/>
            <person name="Borriss R."/>
            <person name="Boursier L."/>
            <person name="Brans A."/>
            <person name="Braun M."/>
            <person name="Brignell S.C."/>
            <person name="Bron S."/>
            <person name="Brouillet S."/>
            <person name="Bruschi C.V."/>
            <person name="Caldwell B."/>
            <person name="Capuano V."/>
            <person name="Carter N.M."/>
            <person name="Choi S.-K."/>
            <person name="Codani J.-J."/>
            <person name="Connerton I.F."/>
            <person name="Cummings N.J."/>
            <person name="Daniel R.A."/>
            <person name="Denizot F."/>
            <person name="Devine K.M."/>
            <person name="Duesterhoeft A."/>
            <person name="Ehrlich S.D."/>
            <person name="Emmerson P.T."/>
            <person name="Entian K.-D."/>
            <person name="Errington J."/>
            <person name="Fabret C."/>
            <person name="Ferrari E."/>
            <person name="Foulger D."/>
            <person name="Fritz C."/>
            <person name="Fujita M."/>
            <person name="Fujita Y."/>
            <person name="Fuma S."/>
            <person name="Galizzi A."/>
            <person name="Galleron N."/>
            <person name="Ghim S.-Y."/>
            <person name="Glaser P."/>
            <person name="Goffeau A."/>
            <person name="Golightly E.J."/>
            <person name="Grandi G."/>
            <person name="Guiseppi G."/>
            <person name="Guy B.J."/>
            <person name="Haga K."/>
            <person name="Haiech J."/>
            <person name="Harwood C.R."/>
            <person name="Henaut A."/>
            <person name="Hilbert H."/>
            <person name="Holsappel S."/>
            <person name="Hosono S."/>
            <person name="Hullo M.-F."/>
            <person name="Itaya M."/>
            <person name="Jones L.-M."/>
            <person name="Joris B."/>
            <person name="Karamata D."/>
            <person name="Kasahara Y."/>
            <person name="Klaerr-Blanchard M."/>
            <person name="Klein C."/>
            <person name="Kobayashi Y."/>
            <person name="Koetter P."/>
            <person name="Koningstein G."/>
            <person name="Krogh S."/>
            <person name="Kumano M."/>
            <person name="Kurita K."/>
            <person name="Lapidus A."/>
            <person name="Lardinois S."/>
            <person name="Lauber J."/>
            <person name="Lazarevic V."/>
            <person name="Lee S.-M."/>
            <person name="Levine A."/>
            <person name="Liu H."/>
            <person name="Masuda S."/>
            <person name="Mauel C."/>
            <person name="Medigue C."/>
            <person name="Medina N."/>
            <person name="Mellado R.P."/>
            <person name="Mizuno M."/>
            <person name="Moestl D."/>
            <person name="Nakai S."/>
            <person name="Noback M."/>
            <person name="Noone D."/>
            <person name="O'Reilly M."/>
            <person name="Ogawa K."/>
            <person name="Ogiwara A."/>
            <person name="Oudega B."/>
            <person name="Park S.-H."/>
            <person name="Parro V."/>
            <person name="Pohl T.M."/>
            <person name="Portetelle D."/>
            <person name="Porwollik S."/>
            <person name="Prescott A.M."/>
            <person name="Presecan E."/>
            <person name="Pujic P."/>
            <person name="Purnelle B."/>
            <person name="Rapoport G."/>
            <person name="Rey M."/>
            <person name="Reynolds S."/>
            <person name="Rieger M."/>
            <person name="Rivolta C."/>
            <person name="Rocha E."/>
            <person name="Roche B."/>
            <person name="Rose M."/>
            <person name="Sadaie Y."/>
            <person name="Sato T."/>
            <person name="Scanlan E."/>
            <person name="Schleich S."/>
            <person name="Schroeter R."/>
            <person name="Scoffone F."/>
            <person name="Sekiguchi J."/>
            <person name="Sekowska A."/>
            <person name="Seror S.J."/>
            <person name="Serror P."/>
            <person name="Shin B.-S."/>
            <person name="Soldo B."/>
            <person name="Sorokin A."/>
            <person name="Tacconi E."/>
            <person name="Takagi T."/>
            <person name="Takahashi H."/>
            <person name="Takemaru K."/>
            <person name="Takeuchi M."/>
            <person name="Tamakoshi A."/>
            <person name="Tanaka T."/>
            <person name="Terpstra P."/>
            <person name="Tognoni A."/>
            <person name="Tosato V."/>
            <person name="Uchiyama S."/>
            <person name="Vandenbol M."/>
            <person name="Vannier F."/>
            <person name="Vassarotti A."/>
            <person name="Viari A."/>
            <person name="Wambutt R."/>
            <person name="Wedler E."/>
            <person name="Wedler H."/>
            <person name="Weitzenegger T."/>
            <person name="Winters P."/>
            <person name="Wipat A."/>
            <person name="Yamamoto H."/>
            <person name="Yamane K."/>
            <person name="Yasumoto K."/>
            <person name="Yata K."/>
            <person name="Yoshida K."/>
            <person name="Yoshikawa H.-F."/>
            <person name="Zumstein E."/>
            <person name="Yoshikawa H."/>
            <person name="Danchin A."/>
        </authorList>
    </citation>
    <scope>NUCLEOTIDE SEQUENCE [LARGE SCALE GENOMIC DNA]</scope>
    <source>
        <strain>168</strain>
    </source>
</reference>
<reference key="3">
    <citation type="journal article" date="2003" name="Mol. Microbiol.">
        <title>Genes controlled by the essential YycG/YycF two-component system of Bacillus subtilis revealed through a novel hybrid regulator approach.</title>
        <authorList>
            <person name="Howell A."/>
            <person name="Dubrac S."/>
            <person name="Andersen K.K."/>
            <person name="Noone D."/>
            <person name="Fert J."/>
            <person name="Msadek T."/>
            <person name="Devine K."/>
        </authorList>
    </citation>
    <scope>REGULATION BY WALR/WALK</scope>
</reference>
<reference key="4">
    <citation type="journal article" date="2007" name="Mol. Cell. Proteomics">
        <title>The serine/threonine/tyrosine phosphoproteome of the model bacterium Bacillus subtilis.</title>
        <authorList>
            <person name="Macek B."/>
            <person name="Mijakovic I."/>
            <person name="Olsen J.V."/>
            <person name="Gnad F."/>
            <person name="Kumar C."/>
            <person name="Jensen P.R."/>
            <person name="Mann M."/>
        </authorList>
    </citation>
    <scope>PHOSPHORYLATION [LARGE SCALE ANALYSIS] AT SER-2</scope>
    <scope>IDENTIFICATION BY MASS SPECTROMETRY</scope>
    <source>
        <strain>168</strain>
    </source>
</reference>
<reference key="5">
    <citation type="journal article" date="2011" name="J. Biol. Chem.">
        <title>Studies of the genetics, function, and kinetic mechanism of TagE, the wall teichoic acid glycosyltransferase in Bacillus subtilis 168.</title>
        <authorList>
            <person name="Allison S.E."/>
            <person name="D'Elia M.A."/>
            <person name="Arar S."/>
            <person name="Monteiro M.A."/>
            <person name="Brown E.D."/>
        </authorList>
    </citation>
    <scope>FUNCTION</scope>
    <scope>CATALYTIC ACTIVITY</scope>
    <scope>BIOPHYSICOCHEMICAL PROPERTIES</scope>
    <scope>SUBSTRATE SPECIFICITY</scope>
    <scope>DISRUPTION PHENOTYPE</scope>
    <source>
        <strain>168 / EB6</strain>
    </source>
</reference>
<accession>P13484</accession>
<dbReference type="EC" id="2.4.1.52" evidence="2"/>
<dbReference type="EMBL" id="X15200">
    <property type="protein sequence ID" value="CAA33270.1"/>
    <property type="molecule type" value="Genomic_DNA"/>
</dbReference>
<dbReference type="EMBL" id="AL009126">
    <property type="protein sequence ID" value="CAB15590.1"/>
    <property type="molecule type" value="Genomic_DNA"/>
</dbReference>
<dbReference type="PIR" id="S06048">
    <property type="entry name" value="S06048"/>
</dbReference>
<dbReference type="RefSeq" id="NP_391454.1">
    <property type="nucleotide sequence ID" value="NC_000964.3"/>
</dbReference>
<dbReference type="RefSeq" id="WP_003243517.1">
    <property type="nucleotide sequence ID" value="NZ_OZ025638.1"/>
</dbReference>
<dbReference type="SMR" id="P13484"/>
<dbReference type="FunCoup" id="P13484">
    <property type="interactions" value="44"/>
</dbReference>
<dbReference type="IntAct" id="P13484">
    <property type="interactions" value="2"/>
</dbReference>
<dbReference type="STRING" id="224308.BSU35730"/>
<dbReference type="CAZy" id="GT4">
    <property type="family name" value="Glycosyltransferase Family 4"/>
</dbReference>
<dbReference type="iPTMnet" id="P13484"/>
<dbReference type="jPOST" id="P13484"/>
<dbReference type="PaxDb" id="224308-BSU35730"/>
<dbReference type="EnsemblBacteria" id="CAB15590">
    <property type="protein sequence ID" value="CAB15590"/>
    <property type="gene ID" value="BSU_35730"/>
</dbReference>
<dbReference type="GeneID" id="936804"/>
<dbReference type="KEGG" id="bsu:BSU35730"/>
<dbReference type="PATRIC" id="fig|224308.179.peg.3868"/>
<dbReference type="eggNOG" id="COG0438">
    <property type="taxonomic scope" value="Bacteria"/>
</dbReference>
<dbReference type="InParanoid" id="P13484"/>
<dbReference type="OrthoDB" id="570545at2"/>
<dbReference type="PhylomeDB" id="P13484"/>
<dbReference type="BioCyc" id="BSUB:BSU35730-MONOMER"/>
<dbReference type="BioCyc" id="MetaCyc:BSU35730-MONOMER"/>
<dbReference type="UniPathway" id="UPA00827"/>
<dbReference type="Proteomes" id="UP000001570">
    <property type="component" value="Chromosome"/>
</dbReference>
<dbReference type="GO" id="GO:0005737">
    <property type="term" value="C:cytoplasm"/>
    <property type="evidence" value="ECO:0007669"/>
    <property type="project" value="UniProtKB-SubCell"/>
</dbReference>
<dbReference type="GO" id="GO:0047265">
    <property type="term" value="F:poly(glycerol-phosphate) alpha-glucosyltransferase activity"/>
    <property type="evidence" value="ECO:0007669"/>
    <property type="project" value="UniProtKB-EC"/>
</dbReference>
<dbReference type="GO" id="GO:0071555">
    <property type="term" value="P:cell wall organization"/>
    <property type="evidence" value="ECO:0007669"/>
    <property type="project" value="UniProtKB-KW"/>
</dbReference>
<dbReference type="GO" id="GO:0019350">
    <property type="term" value="P:teichoic acid biosynthetic process"/>
    <property type="evidence" value="ECO:0007669"/>
    <property type="project" value="UniProtKB-KW"/>
</dbReference>
<dbReference type="CDD" id="cd04949">
    <property type="entry name" value="GT4_GtfA-like"/>
    <property type="match status" value="1"/>
</dbReference>
<dbReference type="Gene3D" id="3.40.50.2000">
    <property type="entry name" value="Glycogen Phosphorylase B"/>
    <property type="match status" value="3"/>
</dbReference>
<dbReference type="InterPro" id="IPR001296">
    <property type="entry name" value="Glyco_trans_1"/>
</dbReference>
<dbReference type="InterPro" id="IPR015397">
    <property type="entry name" value="Glyco_trans_A_1"/>
</dbReference>
<dbReference type="PANTHER" id="PTHR12526">
    <property type="entry name" value="GLYCOSYLTRANSFERASE"/>
    <property type="match status" value="1"/>
</dbReference>
<dbReference type="PANTHER" id="PTHR12526:SF630">
    <property type="entry name" value="GLYCOSYLTRANSFERASE"/>
    <property type="match status" value="1"/>
</dbReference>
<dbReference type="Pfam" id="PF09318">
    <property type="entry name" value="Glyco_trans_A_1"/>
    <property type="match status" value="1"/>
</dbReference>
<dbReference type="Pfam" id="PF00534">
    <property type="entry name" value="Glycos_transf_1"/>
    <property type="match status" value="1"/>
</dbReference>
<dbReference type="SUPFAM" id="SSF53756">
    <property type="entry name" value="UDP-Glycosyltransferase/glycogen phosphorylase"/>
    <property type="match status" value="1"/>
</dbReference>
<name>TAGE_BACSU</name>
<proteinExistence type="evidence at protein level"/>
<comment type="function">
    <text evidence="2">Catalyzes the addition of glucose to the C-2 hydroxy group of the glycerol units in teichoic acid.</text>
</comment>
<comment type="catalytic activity">
    <reaction evidence="2">
        <text>4-O-{[(2R)-1-glycerylphospho](n)-(2R)-1-glycerylphospho}-N-acetyl-beta-D-mannosaminyl-(1-&gt;4)-N-acetyl-alpha-D-glucosaminyl undecaprenyl diphosphate + n UDP-alpha-D-glucose = 4-O-{[(2R)-2-alpha-D-glucosyl-1-glycerylphospho](n)-(2R)-1-glycerylphospho}-N-acetyl-beta-D-mannosaminyl-(1-&gt;4)-N-acetyl-alpha-D-glucosaminyl undecaprenyl diphosphate + n UDP + n H(+)</text>
        <dbReference type="Rhea" id="RHEA:15845"/>
        <dbReference type="Rhea" id="RHEA-COMP:12597"/>
        <dbReference type="Rhea" id="RHEA-COMP:12614"/>
        <dbReference type="ChEBI" id="CHEBI:15378"/>
        <dbReference type="ChEBI" id="CHEBI:58223"/>
        <dbReference type="ChEBI" id="CHEBI:58885"/>
        <dbReference type="ChEBI" id="CHEBI:132224"/>
        <dbReference type="ChEBI" id="CHEBI:132356"/>
        <dbReference type="EC" id="2.4.1.52"/>
    </reaction>
</comment>
<comment type="biophysicochemical properties">
    <kinetics>
        <KM evidence="2">770 uM for UDP-alpha-D-glucose</KM>
        <KM evidence="2">23 uM for (GroP)n-ManNAc-beta-(1-&gt;4)-GlcNAc-undecaprenyl diphosphate where n=5</KM>
        <KM evidence="2">4.4 uM for (GroP)n-ManNAc-beta-(1-&gt;4)-GlcNAc-undecaprenyl diphosphate where n=40</KM>
        <text evidence="2">kcat is 17 sec(-1).</text>
    </kinetics>
</comment>
<comment type="pathway">
    <text>Cell wall biogenesis; poly(glycerol phosphate) teichoic acid biosynthesis.</text>
</comment>
<comment type="subcellular location">
    <subcellularLocation>
        <location evidence="3">Cytoplasm</location>
    </subcellularLocation>
</comment>
<comment type="induction">
    <text>Positively regulated by WalR. Mainly expressed during exponential growth and rapidly shut off as cells enter the stationary phase.</text>
</comment>
<comment type="disruption phenotype">
    <text evidence="2">Not essential. No glucose groups on the glycerol residues of teichoic acid in cell walls.</text>
</comment>
<comment type="similarity">
    <text evidence="3">Belongs to the glycosyltransferase group 1 family. Glycosyltransferase 4 subfamily.</text>
</comment>
<feature type="chain" id="PRO_0000080308" description="Poly(glycerol-phosphate) alpha-glucosyltransferase">
    <location>
        <begin position="1"/>
        <end position="673"/>
    </location>
</feature>
<feature type="modified residue" description="Phosphoserine" evidence="1">
    <location>
        <position position="2"/>
    </location>
</feature>
<sequence>MSLHAVSESNIKQIPDMDYYFISGGLPSNYGGLTKSLLLRSKLFGEECNQNTFFLTFRFDLELSSKIDELYSNGKIDKKFTSVINLFDDFLSVRTNGKRSYEERIGLDQIKKQVGMGKFAKTLLRLFGKKNNEMSVVYYGDGETIRYVDYWNDKNQLIKREEYTKNGNLVLVTHYDVQLNKMYLQEYINDQNQVYLDKLYVWNNEEKDVQLSHIIWYSLEGEIKVKDESELRQYWIEYLQKQNDKPKLFLVDSRPQDKHVFKVKKSPSSYYGAIIHNKHYGSNKYQIKGRYKEVFSQMYNLDAVFFITEEQLEDFKLISGEQETFFFTPHTIDKPLDPAVLNVPSEKYKAVIISRLASMKNLIHAVKAFSLVVKEIPEAKLDIFGSGEDFEKIKKEIEDTKLQNNVFLKGYTDNPDSEFQKAWLTISTSHFEGFGLSNMEALSNGCPVVTYDYDYGARSLVTDGANGYVIEQYNIEKLGQAIISLMKDESTHQKFSEQAFKMAEKYSRPNYIENWAFALNQMIEVRIEREKFSKKVGKKDPSISSYTEDFDKTKIEIDIENFDHNDIKKIRLVGLDRKNKAEIISTNLQNDQLFVIDLEKDVNIEKIAANKTQVIDFYIVFNANGHIKTMRRLSSEETKLSGNSIDTNNGYRVEPYTTVKGNFSWRVTEIKES</sequence>
<protein>
    <recommendedName>
        <fullName>Poly(glycerol-phosphate) alpha-glucosyltransferase</fullName>
        <ecNumber evidence="2">2.4.1.52</ecNumber>
    </recommendedName>
    <alternativeName>
        <fullName>Major teichoic acid biosynthesis protein E</fullName>
    </alternativeName>
</protein>
<organism>
    <name type="scientific">Bacillus subtilis (strain 168)</name>
    <dbReference type="NCBI Taxonomy" id="224308"/>
    <lineage>
        <taxon>Bacteria</taxon>
        <taxon>Bacillati</taxon>
        <taxon>Bacillota</taxon>
        <taxon>Bacilli</taxon>
        <taxon>Bacillales</taxon>
        <taxon>Bacillaceae</taxon>
        <taxon>Bacillus</taxon>
    </lineage>
</organism>